<feature type="chain" id="PRO_1000084502" description="Glucans biosynthesis glucosyltransferase H">
    <location>
        <begin position="1"/>
        <end position="727"/>
    </location>
</feature>
<feature type="transmembrane region" description="Helical" evidence="1">
    <location>
        <begin position="58"/>
        <end position="78"/>
    </location>
</feature>
<feature type="transmembrane region" description="Helical" evidence="1">
    <location>
        <begin position="97"/>
        <end position="117"/>
    </location>
</feature>
<feature type="transmembrane region" description="Helical" evidence="1">
    <location>
        <begin position="278"/>
        <end position="298"/>
    </location>
</feature>
<feature type="transmembrane region" description="Helical" evidence="1">
    <location>
        <begin position="408"/>
        <end position="428"/>
    </location>
</feature>
<feature type="transmembrane region" description="Helical" evidence="1">
    <location>
        <begin position="460"/>
        <end position="480"/>
    </location>
</feature>
<feature type="transmembrane region" description="Helical" evidence="1">
    <location>
        <begin position="496"/>
        <end position="516"/>
    </location>
</feature>
<feature type="transmembrane region" description="Helical" evidence="1">
    <location>
        <begin position="572"/>
        <end position="592"/>
    </location>
</feature>
<feature type="region of interest" description="Disordered" evidence="2">
    <location>
        <begin position="18"/>
        <end position="38"/>
    </location>
</feature>
<sequence>MTVSENSVLETEVLVGGSAMPNERPGAMEPQNLSKMPEGFPRRSTVANGVRSRASRRFLVVGGALLLSLFAIYEMGAVFSIGGITPLEYLVLALFAVNFCWIALAFCSGIAGFLILLRKPRAKDLQVTELHTRTAILMPTYNESPDRVFSAVSVMAETLSQTGHGHAFDWFILSDTTDPDIALLEEQAFLVLRQETHKHSRVYYRRRRKNVARKAGNVADFCRRWGSRYDHLLVLDADSLMESSTITGLAQRMQADPDAGLIQTIPSLINGTTLMARLQQFAARIYGPVIGTGLGWWVQKEGNFWGHNAIIRTEAFMTAAGLPNLKGKPPFGGHIMSHDFVEAALIRRAGWSVVIAYDLPGSYEECPPSIIDLAVRDRRWCQGNLQHSRILPTKGLHWVSRLHLLTGIMAYLSSPFWLMLILTGLMLALQAHFIRPEYFTDQFSLFPTWPIMDSDRALRLFYITMGVLFGPKVFGVLLLLKDGEFARSVGGRIKAIFSVIFEVILSALIAPIMMFIHCGAVMSILMGRDSGWSPQRRDDGSMPWMTLIYRHRWHMLAGVMLGYAAILDSLTLLAWMSPALIGLWIAVPISAWTGSVKIGEVFKRAGILATPEERNPAQICLQAHEARAAYQKHIAEPWTLAQVLKDPALMELHLAMVDKQPLRAAGTPIEAMEAIVHVKVHEARCQQSALAVLNRQEMAMVLANPLMLRSLQKLPEQFVEEDLVSFC</sequence>
<organism>
    <name type="scientific">Shewanella baltica (strain OS195)</name>
    <dbReference type="NCBI Taxonomy" id="399599"/>
    <lineage>
        <taxon>Bacteria</taxon>
        <taxon>Pseudomonadati</taxon>
        <taxon>Pseudomonadota</taxon>
        <taxon>Gammaproteobacteria</taxon>
        <taxon>Alteromonadales</taxon>
        <taxon>Shewanellaceae</taxon>
        <taxon>Shewanella</taxon>
    </lineage>
</organism>
<name>OPGH_SHEB9</name>
<keyword id="KW-0997">Cell inner membrane</keyword>
<keyword id="KW-1003">Cell membrane</keyword>
<keyword id="KW-0328">Glycosyltransferase</keyword>
<keyword id="KW-0472">Membrane</keyword>
<keyword id="KW-0808">Transferase</keyword>
<keyword id="KW-0812">Transmembrane</keyword>
<keyword id="KW-1133">Transmembrane helix</keyword>
<dbReference type="EC" id="2.4.1.-" evidence="1"/>
<dbReference type="EMBL" id="CP000891">
    <property type="protein sequence ID" value="ABX49101.1"/>
    <property type="molecule type" value="Genomic_DNA"/>
</dbReference>
<dbReference type="CAZy" id="GT2">
    <property type="family name" value="Glycosyltransferase Family 2"/>
</dbReference>
<dbReference type="KEGG" id="sbn:Sbal195_1930"/>
<dbReference type="HOGENOM" id="CLU_015730_1_0_6"/>
<dbReference type="UniPathway" id="UPA00637"/>
<dbReference type="Proteomes" id="UP000000770">
    <property type="component" value="Chromosome"/>
</dbReference>
<dbReference type="GO" id="GO:0005886">
    <property type="term" value="C:plasma membrane"/>
    <property type="evidence" value="ECO:0007669"/>
    <property type="project" value="UniProtKB-SubCell"/>
</dbReference>
<dbReference type="GO" id="GO:0016758">
    <property type="term" value="F:hexosyltransferase activity"/>
    <property type="evidence" value="ECO:0007669"/>
    <property type="project" value="UniProtKB-UniRule"/>
</dbReference>
<dbReference type="GO" id="GO:0009250">
    <property type="term" value="P:glucan biosynthetic process"/>
    <property type="evidence" value="ECO:0007669"/>
    <property type="project" value="UniProtKB-UniRule"/>
</dbReference>
<dbReference type="CDD" id="cd04191">
    <property type="entry name" value="Glucan_BSP_MdoH"/>
    <property type="match status" value="1"/>
</dbReference>
<dbReference type="FunFam" id="3.90.550.10:FF:000047">
    <property type="entry name" value="Glucans biosynthesis glucosyltransferase H"/>
    <property type="match status" value="1"/>
</dbReference>
<dbReference type="Gene3D" id="3.90.550.10">
    <property type="entry name" value="Spore Coat Polysaccharide Biosynthesis Protein SpsA, Chain A"/>
    <property type="match status" value="1"/>
</dbReference>
<dbReference type="HAMAP" id="MF_01072">
    <property type="entry name" value="MdoH_OpgH"/>
    <property type="match status" value="1"/>
</dbReference>
<dbReference type="InterPro" id="IPR023725">
    <property type="entry name" value="Glucans_biosynth_gluTrFase_H"/>
</dbReference>
<dbReference type="InterPro" id="IPR001173">
    <property type="entry name" value="Glyco_trans_2-like"/>
</dbReference>
<dbReference type="InterPro" id="IPR050321">
    <property type="entry name" value="Glycosyltr_2/OpgH_subfam"/>
</dbReference>
<dbReference type="InterPro" id="IPR029044">
    <property type="entry name" value="Nucleotide-diphossugar_trans"/>
</dbReference>
<dbReference type="NCBIfam" id="NF003956">
    <property type="entry name" value="PRK05454.1-3"/>
    <property type="match status" value="1"/>
</dbReference>
<dbReference type="NCBIfam" id="NF003958">
    <property type="entry name" value="PRK05454.2-1"/>
    <property type="match status" value="1"/>
</dbReference>
<dbReference type="NCBIfam" id="NF003962">
    <property type="entry name" value="PRK05454.2-5"/>
    <property type="match status" value="1"/>
</dbReference>
<dbReference type="PANTHER" id="PTHR43867">
    <property type="entry name" value="CELLULOSE SYNTHASE CATALYTIC SUBUNIT A [UDP-FORMING]"/>
    <property type="match status" value="1"/>
</dbReference>
<dbReference type="PANTHER" id="PTHR43867:SF5">
    <property type="entry name" value="GLUCANS BIOSYNTHESIS GLUCOSYLTRANSFERASE H"/>
    <property type="match status" value="1"/>
</dbReference>
<dbReference type="Pfam" id="PF13632">
    <property type="entry name" value="Glyco_trans_2_3"/>
    <property type="match status" value="1"/>
</dbReference>
<dbReference type="SUPFAM" id="SSF53448">
    <property type="entry name" value="Nucleotide-diphospho-sugar transferases"/>
    <property type="match status" value="1"/>
</dbReference>
<gene>
    <name evidence="1" type="primary">opgH</name>
    <name type="ordered locus">Sbal195_1930</name>
</gene>
<comment type="function">
    <text evidence="1">Involved in the biosynthesis of osmoregulated periplasmic glucans (OPGs).</text>
</comment>
<comment type="pathway">
    <text evidence="1">Glycan metabolism; osmoregulated periplasmic glucan (OPG) biosynthesis.</text>
</comment>
<comment type="subcellular location">
    <subcellularLocation>
        <location evidence="1">Cell inner membrane</location>
        <topology evidence="1">Multi-pass membrane protein</topology>
    </subcellularLocation>
</comment>
<comment type="similarity">
    <text evidence="1">Belongs to the glycosyltransferase 2 family. OpgH subfamily.</text>
</comment>
<accession>A9KZ13</accession>
<proteinExistence type="inferred from homology"/>
<evidence type="ECO:0000255" key="1">
    <source>
        <dbReference type="HAMAP-Rule" id="MF_01072"/>
    </source>
</evidence>
<evidence type="ECO:0000256" key="2">
    <source>
        <dbReference type="SAM" id="MobiDB-lite"/>
    </source>
</evidence>
<reference key="1">
    <citation type="submission" date="2007-11" db="EMBL/GenBank/DDBJ databases">
        <title>Complete sequence of chromosome of Shewanella baltica OS195.</title>
        <authorList>
            <consortium name="US DOE Joint Genome Institute"/>
            <person name="Copeland A."/>
            <person name="Lucas S."/>
            <person name="Lapidus A."/>
            <person name="Barry K."/>
            <person name="Glavina del Rio T."/>
            <person name="Dalin E."/>
            <person name="Tice H."/>
            <person name="Pitluck S."/>
            <person name="Chain P."/>
            <person name="Malfatti S."/>
            <person name="Shin M."/>
            <person name="Vergez L."/>
            <person name="Schmutz J."/>
            <person name="Larimer F."/>
            <person name="Land M."/>
            <person name="Hauser L."/>
            <person name="Kyrpides N."/>
            <person name="Kim E."/>
            <person name="Brettar I."/>
            <person name="Rodrigues J."/>
            <person name="Konstantinidis K."/>
            <person name="Klappenbach J."/>
            <person name="Hofle M."/>
            <person name="Tiedje J."/>
            <person name="Richardson P."/>
        </authorList>
    </citation>
    <scope>NUCLEOTIDE SEQUENCE [LARGE SCALE GENOMIC DNA]</scope>
    <source>
        <strain>OS195</strain>
    </source>
</reference>
<protein>
    <recommendedName>
        <fullName evidence="1">Glucans biosynthesis glucosyltransferase H</fullName>
        <ecNumber evidence="1">2.4.1.-</ecNumber>
    </recommendedName>
</protein>